<proteinExistence type="inferred from homology"/>
<sequence length="772" mass="84159">MKKLTIGLIGNPNSGKTTLFNQLTGARQRVGNWAGVTVERKEGQFATTDHQVTLVDLPGTYSLTTISSQTSLDEQIACHYILSGDADLLINVVDASNLERNLYLTLQLLELGIPCIVALNMLDIAEKQQVRIDVDALSTRLGCPVVPLVSTRGRGIEALKLAIDRHNANDNVELVHYAQPLLREAGFLADAMAQEMPLQQRRWLGLQMLEGDIYSRAYAGEAAQNLDTSLARLKDEMDDPALHIADARYQCIAAICDVVSNTLTAEPSRFTRAVDKIILNRFLGLPIFLFVMYLMFLLAINIGGALQPLFDAGSVAIFIHGIQWIGYTLHFPDWLTIFLAQGLGGGINTVLPLVPQIGMMYLFLSFLEDSGYMARAAFVMDRLMQALGLPGKSFVPLIVGFGCNVPSVMGARTLDAPRERLMTIMMAPFMSCGARLAIFAVFAAAFFGQNGALAVFSLYVLGIVMAVLTGLMLKHTIMRGEASPFVMELPVYHVPHIKSLIIQTWQRLKGFVLRAGKVIIIVSIFLSAFNSFSLSGKIVDNINDSALASVSRVITPVFKPIGVHEDNWQATVGLFTGAMAKEVVVGTLNTLYTAENIQDEAFNPADFHLGDELLGAVDDTWQSLKDTFSLSVLANPIEASKGDGEMATGAMGVMDQKFGSAAAAYSYLIFVLLYVPCISVMGAIARESSRGWMSFSILWGLNIAYSLATLFYQVTSFSQHPTYSLICILAVIVFNVVVLSLLRRARSRVDIELLATRKSVTSCCSGTAGNCH</sequence>
<gene>
    <name type="primary">feoB</name>
    <name type="ordered locus">SPA3371</name>
</gene>
<evidence type="ECO:0000250" key="1">
    <source>
        <dbReference type="UniProtKB" id="P33650"/>
    </source>
</evidence>
<evidence type="ECO:0000255" key="2"/>
<evidence type="ECO:0000255" key="3">
    <source>
        <dbReference type="PROSITE-ProRule" id="PRU01048"/>
    </source>
</evidence>
<evidence type="ECO:0000305" key="4"/>
<feature type="chain" id="PRO_0000210825" description="Fe(2+) transporter FeoB">
    <location>
        <begin position="1"/>
        <end position="772"/>
    </location>
</feature>
<feature type="transmembrane region" description="Helical" evidence="2">
    <location>
        <begin position="282"/>
        <end position="302"/>
    </location>
</feature>
<feature type="transmembrane region" description="Helical" evidence="2">
    <location>
        <begin position="309"/>
        <end position="329"/>
    </location>
</feature>
<feature type="transmembrane region" description="Helical" evidence="2">
    <location>
        <begin position="344"/>
        <end position="366"/>
    </location>
</feature>
<feature type="transmembrane region" description="Helical" evidence="2">
    <location>
        <begin position="383"/>
        <end position="403"/>
    </location>
</feature>
<feature type="transmembrane region" description="Helical" evidence="2">
    <location>
        <begin position="427"/>
        <end position="447"/>
    </location>
</feature>
<feature type="transmembrane region" description="Helical" evidence="2">
    <location>
        <begin position="453"/>
        <end position="473"/>
    </location>
</feature>
<feature type="transmembrane region" description="Helical" evidence="2">
    <location>
        <begin position="518"/>
        <end position="538"/>
    </location>
</feature>
<feature type="transmembrane region" description="Helical" evidence="2">
    <location>
        <begin position="664"/>
        <end position="684"/>
    </location>
</feature>
<feature type="transmembrane region" description="Helical" evidence="2">
    <location>
        <begin position="691"/>
        <end position="711"/>
    </location>
</feature>
<feature type="transmembrane region" description="Helical" evidence="2">
    <location>
        <begin position="722"/>
        <end position="742"/>
    </location>
</feature>
<feature type="domain" description="FeoB-type G" evidence="3">
    <location>
        <begin position="3"/>
        <end position="169"/>
    </location>
</feature>
<feature type="binding site" evidence="3">
    <location>
        <begin position="10"/>
        <end position="17"/>
    </location>
    <ligand>
        <name>GTP</name>
        <dbReference type="ChEBI" id="CHEBI:37565"/>
        <label>1</label>
    </ligand>
</feature>
<feature type="binding site" evidence="3">
    <location>
        <begin position="35"/>
        <end position="39"/>
    </location>
    <ligand>
        <name>GTP</name>
        <dbReference type="ChEBI" id="CHEBI:37565"/>
        <label>2</label>
    </ligand>
</feature>
<feature type="binding site" evidence="3">
    <location>
        <begin position="56"/>
        <end position="59"/>
    </location>
    <ligand>
        <name>GTP</name>
        <dbReference type="ChEBI" id="CHEBI:37565"/>
        <label>3</label>
    </ligand>
</feature>
<feature type="binding site" evidence="3">
    <location>
        <begin position="120"/>
        <end position="123"/>
    </location>
    <ligand>
        <name>GTP</name>
        <dbReference type="ChEBI" id="CHEBI:37565"/>
    </ligand>
</feature>
<feature type="binding site" evidence="3">
    <location>
        <begin position="149"/>
        <end position="151"/>
    </location>
    <ligand>
        <name>GTP</name>
        <dbReference type="ChEBI" id="CHEBI:37565"/>
    </ligand>
</feature>
<protein>
    <recommendedName>
        <fullName evidence="4">Fe(2+) transporter FeoB</fullName>
    </recommendedName>
    <alternativeName>
        <fullName>Ferrous iron transport protein B</fullName>
    </alternativeName>
</protein>
<dbReference type="EMBL" id="CP000026">
    <property type="protein sequence ID" value="AAV79184.1"/>
    <property type="molecule type" value="Genomic_DNA"/>
</dbReference>
<dbReference type="RefSeq" id="WP_000736984.1">
    <property type="nucleotide sequence ID" value="NC_006511.1"/>
</dbReference>
<dbReference type="SMR" id="Q5PLZ1"/>
<dbReference type="KEGG" id="spt:SPA3371"/>
<dbReference type="HOGENOM" id="CLU_013350_3_0_6"/>
<dbReference type="Proteomes" id="UP000008185">
    <property type="component" value="Chromosome"/>
</dbReference>
<dbReference type="GO" id="GO:0005886">
    <property type="term" value="C:plasma membrane"/>
    <property type="evidence" value="ECO:0007669"/>
    <property type="project" value="UniProtKB-SubCell"/>
</dbReference>
<dbReference type="GO" id="GO:0015093">
    <property type="term" value="F:ferrous iron transmembrane transporter activity"/>
    <property type="evidence" value="ECO:0007669"/>
    <property type="project" value="InterPro"/>
</dbReference>
<dbReference type="GO" id="GO:0005525">
    <property type="term" value="F:GTP binding"/>
    <property type="evidence" value="ECO:0007669"/>
    <property type="project" value="UniProtKB-KW"/>
</dbReference>
<dbReference type="CDD" id="cd01879">
    <property type="entry name" value="FeoB"/>
    <property type="match status" value="1"/>
</dbReference>
<dbReference type="FunFam" id="3.40.50.300:FF:000426">
    <property type="entry name" value="Ferrous iron transport protein B"/>
    <property type="match status" value="1"/>
</dbReference>
<dbReference type="Gene3D" id="1.10.287.1770">
    <property type="match status" value="1"/>
</dbReference>
<dbReference type="Gene3D" id="3.40.50.300">
    <property type="entry name" value="P-loop containing nucleotide triphosphate hydrolases"/>
    <property type="match status" value="1"/>
</dbReference>
<dbReference type="InterPro" id="IPR003373">
    <property type="entry name" value="Fe2_transport_prot-B"/>
</dbReference>
<dbReference type="InterPro" id="IPR011640">
    <property type="entry name" value="Fe2_transport_prot_B_C"/>
</dbReference>
<dbReference type="InterPro" id="IPR041069">
    <property type="entry name" value="FeoB_Cyto"/>
</dbReference>
<dbReference type="InterPro" id="IPR050860">
    <property type="entry name" value="FeoB_GTPase"/>
</dbReference>
<dbReference type="InterPro" id="IPR030389">
    <property type="entry name" value="G_FEOB_dom"/>
</dbReference>
<dbReference type="InterPro" id="IPR011642">
    <property type="entry name" value="Gate_dom"/>
</dbReference>
<dbReference type="InterPro" id="IPR027417">
    <property type="entry name" value="P-loop_NTPase"/>
</dbReference>
<dbReference type="InterPro" id="IPR005225">
    <property type="entry name" value="Small_GTP-bd"/>
</dbReference>
<dbReference type="NCBIfam" id="TIGR00437">
    <property type="entry name" value="feoB"/>
    <property type="match status" value="1"/>
</dbReference>
<dbReference type="NCBIfam" id="NF007105">
    <property type="entry name" value="PRK09554.1"/>
    <property type="match status" value="1"/>
</dbReference>
<dbReference type="NCBIfam" id="TIGR00231">
    <property type="entry name" value="small_GTP"/>
    <property type="match status" value="1"/>
</dbReference>
<dbReference type="PANTHER" id="PTHR43185:SF1">
    <property type="entry name" value="FE(2+) TRANSPORTER FEOB"/>
    <property type="match status" value="1"/>
</dbReference>
<dbReference type="PANTHER" id="PTHR43185">
    <property type="entry name" value="FERROUS IRON TRANSPORT PROTEIN B"/>
    <property type="match status" value="1"/>
</dbReference>
<dbReference type="Pfam" id="PF07664">
    <property type="entry name" value="FeoB_C"/>
    <property type="match status" value="1"/>
</dbReference>
<dbReference type="Pfam" id="PF17910">
    <property type="entry name" value="FeoB_Cyto"/>
    <property type="match status" value="1"/>
</dbReference>
<dbReference type="Pfam" id="PF02421">
    <property type="entry name" value="FeoB_N"/>
    <property type="match status" value="1"/>
</dbReference>
<dbReference type="Pfam" id="PF07670">
    <property type="entry name" value="Gate"/>
    <property type="match status" value="2"/>
</dbReference>
<dbReference type="SUPFAM" id="SSF52540">
    <property type="entry name" value="P-loop containing nucleoside triphosphate hydrolases"/>
    <property type="match status" value="1"/>
</dbReference>
<dbReference type="PROSITE" id="PS51711">
    <property type="entry name" value="G_FEOB"/>
    <property type="match status" value="1"/>
</dbReference>
<keyword id="KW-0997">Cell inner membrane</keyword>
<keyword id="KW-1003">Cell membrane</keyword>
<keyword id="KW-0342">GTP-binding</keyword>
<keyword id="KW-0406">Ion transport</keyword>
<keyword id="KW-0408">Iron</keyword>
<keyword id="KW-0410">Iron transport</keyword>
<keyword id="KW-0472">Membrane</keyword>
<keyword id="KW-0547">Nucleotide-binding</keyword>
<keyword id="KW-0812">Transmembrane</keyword>
<keyword id="KW-1133">Transmembrane helix</keyword>
<keyword id="KW-0813">Transport</keyword>
<organism>
    <name type="scientific">Salmonella paratyphi A (strain ATCC 9150 / SARB42)</name>
    <dbReference type="NCBI Taxonomy" id="295319"/>
    <lineage>
        <taxon>Bacteria</taxon>
        <taxon>Pseudomonadati</taxon>
        <taxon>Pseudomonadota</taxon>
        <taxon>Gammaproteobacteria</taxon>
        <taxon>Enterobacterales</taxon>
        <taxon>Enterobacteriaceae</taxon>
        <taxon>Salmonella</taxon>
    </lineage>
</organism>
<name>FEOB_SALPA</name>
<reference key="1">
    <citation type="journal article" date="2004" name="Nat. Genet.">
        <title>Comparison of genome degradation in Paratyphi A and Typhi, human-restricted serovars of Salmonella enterica that cause typhoid.</title>
        <authorList>
            <person name="McClelland M."/>
            <person name="Sanderson K.E."/>
            <person name="Clifton S.W."/>
            <person name="Latreille P."/>
            <person name="Porwollik S."/>
            <person name="Sabo A."/>
            <person name="Meyer R."/>
            <person name="Bieri T."/>
            <person name="Ozersky P."/>
            <person name="McLellan M."/>
            <person name="Harkins C.R."/>
            <person name="Wang C."/>
            <person name="Nguyen C."/>
            <person name="Berghoff A."/>
            <person name="Elliott G."/>
            <person name="Kohlberg S."/>
            <person name="Strong C."/>
            <person name="Du F."/>
            <person name="Carter J."/>
            <person name="Kremizki C."/>
            <person name="Layman D."/>
            <person name="Leonard S."/>
            <person name="Sun H."/>
            <person name="Fulton L."/>
            <person name="Nash W."/>
            <person name="Miner T."/>
            <person name="Minx P."/>
            <person name="Delehaunty K."/>
            <person name="Fronick C."/>
            <person name="Magrini V."/>
            <person name="Nhan M."/>
            <person name="Warren W."/>
            <person name="Florea L."/>
            <person name="Spieth J."/>
            <person name="Wilson R.K."/>
        </authorList>
    </citation>
    <scope>NUCLEOTIDE SEQUENCE [LARGE SCALE GENOMIC DNA]</scope>
    <source>
        <strain>ATCC 9150 / SARB42</strain>
    </source>
</reference>
<comment type="function">
    <text evidence="1">Probable transporter of a GTP-driven Fe(2+) uptake system.</text>
</comment>
<comment type="subcellular location">
    <subcellularLocation>
        <location evidence="1">Cell inner membrane</location>
        <topology evidence="1">Multi-pass membrane protein</topology>
    </subcellularLocation>
</comment>
<comment type="induction">
    <text evidence="1">Iron uptake is repressed by the global regulator Fur.</text>
</comment>
<comment type="similarity">
    <text evidence="3">Belongs to the TRAFAC class TrmE-Era-EngA-EngB-Septin-like GTPase superfamily. FeoB GTPase (TC 9.A.8) family.</text>
</comment>
<accession>Q5PLZ1</accession>